<dbReference type="EMBL" id="AE006470">
    <property type="protein sequence ID" value="AAM73396.1"/>
    <property type="molecule type" value="Genomic_DNA"/>
</dbReference>
<dbReference type="RefSeq" id="NP_663054.1">
    <property type="nucleotide sequence ID" value="NC_002932.3"/>
</dbReference>
<dbReference type="RefSeq" id="WP_010933833.1">
    <property type="nucleotide sequence ID" value="NC_002932.3"/>
</dbReference>
<dbReference type="SMR" id="Q8KAI1"/>
<dbReference type="STRING" id="194439.CT2180"/>
<dbReference type="EnsemblBacteria" id="AAM73396">
    <property type="protein sequence ID" value="AAM73396"/>
    <property type="gene ID" value="CT2180"/>
</dbReference>
<dbReference type="KEGG" id="cte:CT2180"/>
<dbReference type="PATRIC" id="fig|194439.7.peg.1979"/>
<dbReference type="eggNOG" id="COG0186">
    <property type="taxonomic scope" value="Bacteria"/>
</dbReference>
<dbReference type="HOGENOM" id="CLU_073626_1_1_10"/>
<dbReference type="OrthoDB" id="9811714at2"/>
<dbReference type="Proteomes" id="UP000001007">
    <property type="component" value="Chromosome"/>
</dbReference>
<dbReference type="GO" id="GO:0022627">
    <property type="term" value="C:cytosolic small ribosomal subunit"/>
    <property type="evidence" value="ECO:0007669"/>
    <property type="project" value="TreeGrafter"/>
</dbReference>
<dbReference type="GO" id="GO:0019843">
    <property type="term" value="F:rRNA binding"/>
    <property type="evidence" value="ECO:0007669"/>
    <property type="project" value="UniProtKB-UniRule"/>
</dbReference>
<dbReference type="GO" id="GO:0003735">
    <property type="term" value="F:structural constituent of ribosome"/>
    <property type="evidence" value="ECO:0007669"/>
    <property type="project" value="InterPro"/>
</dbReference>
<dbReference type="GO" id="GO:0006412">
    <property type="term" value="P:translation"/>
    <property type="evidence" value="ECO:0007669"/>
    <property type="project" value="UniProtKB-UniRule"/>
</dbReference>
<dbReference type="CDD" id="cd00364">
    <property type="entry name" value="Ribosomal_uS17"/>
    <property type="match status" value="1"/>
</dbReference>
<dbReference type="Gene3D" id="2.40.50.140">
    <property type="entry name" value="Nucleic acid-binding proteins"/>
    <property type="match status" value="1"/>
</dbReference>
<dbReference type="HAMAP" id="MF_01345_B">
    <property type="entry name" value="Ribosomal_uS17_B"/>
    <property type="match status" value="1"/>
</dbReference>
<dbReference type="InterPro" id="IPR012340">
    <property type="entry name" value="NA-bd_OB-fold"/>
</dbReference>
<dbReference type="InterPro" id="IPR000266">
    <property type="entry name" value="Ribosomal_uS17"/>
</dbReference>
<dbReference type="InterPro" id="IPR019984">
    <property type="entry name" value="Ribosomal_uS17_bact/chlr"/>
</dbReference>
<dbReference type="InterPro" id="IPR019979">
    <property type="entry name" value="Ribosomal_uS17_CS"/>
</dbReference>
<dbReference type="NCBIfam" id="NF004123">
    <property type="entry name" value="PRK05610.1"/>
    <property type="match status" value="1"/>
</dbReference>
<dbReference type="NCBIfam" id="TIGR03635">
    <property type="entry name" value="uS17_bact"/>
    <property type="match status" value="1"/>
</dbReference>
<dbReference type="PANTHER" id="PTHR10744">
    <property type="entry name" value="40S RIBOSOMAL PROTEIN S11 FAMILY MEMBER"/>
    <property type="match status" value="1"/>
</dbReference>
<dbReference type="PANTHER" id="PTHR10744:SF1">
    <property type="entry name" value="SMALL RIBOSOMAL SUBUNIT PROTEIN US17M"/>
    <property type="match status" value="1"/>
</dbReference>
<dbReference type="Pfam" id="PF00366">
    <property type="entry name" value="Ribosomal_S17"/>
    <property type="match status" value="1"/>
</dbReference>
<dbReference type="PRINTS" id="PR00973">
    <property type="entry name" value="RIBOSOMALS17"/>
</dbReference>
<dbReference type="SUPFAM" id="SSF50249">
    <property type="entry name" value="Nucleic acid-binding proteins"/>
    <property type="match status" value="1"/>
</dbReference>
<dbReference type="PROSITE" id="PS00056">
    <property type="entry name" value="RIBOSOMAL_S17"/>
    <property type="match status" value="1"/>
</dbReference>
<sequence length="89" mass="10076">MSSGAETRGRKKSWLGKVVSDSMDKGIVVAVERRVQHPVYKKYFKKTTRLMAHDENNEAGVGDLVRITECRPLSKNKSCRLVEIVEKAK</sequence>
<evidence type="ECO:0000255" key="1">
    <source>
        <dbReference type="HAMAP-Rule" id="MF_01345"/>
    </source>
</evidence>
<evidence type="ECO:0000305" key="2"/>
<feature type="chain" id="PRO_0000233458" description="Small ribosomal subunit protein uS17">
    <location>
        <begin position="1"/>
        <end position="89"/>
    </location>
</feature>
<name>RS17_CHLTE</name>
<accession>Q8KAI1</accession>
<reference key="1">
    <citation type="journal article" date="2002" name="Proc. Natl. Acad. Sci. U.S.A.">
        <title>The complete genome sequence of Chlorobium tepidum TLS, a photosynthetic, anaerobic, green-sulfur bacterium.</title>
        <authorList>
            <person name="Eisen J.A."/>
            <person name="Nelson K.E."/>
            <person name="Paulsen I.T."/>
            <person name="Heidelberg J.F."/>
            <person name="Wu M."/>
            <person name="Dodson R.J."/>
            <person name="DeBoy R.T."/>
            <person name="Gwinn M.L."/>
            <person name="Nelson W.C."/>
            <person name="Haft D.H."/>
            <person name="Hickey E.K."/>
            <person name="Peterson J.D."/>
            <person name="Durkin A.S."/>
            <person name="Kolonay J.F."/>
            <person name="Yang F."/>
            <person name="Holt I.E."/>
            <person name="Umayam L.A."/>
            <person name="Mason T.M."/>
            <person name="Brenner M."/>
            <person name="Shea T.P."/>
            <person name="Parksey D.S."/>
            <person name="Nierman W.C."/>
            <person name="Feldblyum T.V."/>
            <person name="Hansen C.L."/>
            <person name="Craven M.B."/>
            <person name="Radune D."/>
            <person name="Vamathevan J.J."/>
            <person name="Khouri H.M."/>
            <person name="White O."/>
            <person name="Gruber T.M."/>
            <person name="Ketchum K.A."/>
            <person name="Venter J.C."/>
            <person name="Tettelin H."/>
            <person name="Bryant D.A."/>
            <person name="Fraser C.M."/>
        </authorList>
    </citation>
    <scope>NUCLEOTIDE SEQUENCE [LARGE SCALE GENOMIC DNA]</scope>
    <source>
        <strain>ATCC 49652 / DSM 12025 / NBRC 103806 / TLS</strain>
    </source>
</reference>
<keyword id="KW-1185">Reference proteome</keyword>
<keyword id="KW-0687">Ribonucleoprotein</keyword>
<keyword id="KW-0689">Ribosomal protein</keyword>
<keyword id="KW-0694">RNA-binding</keyword>
<keyword id="KW-0699">rRNA-binding</keyword>
<comment type="function">
    <text evidence="1">One of the primary rRNA binding proteins, it binds specifically to the 5'-end of 16S ribosomal RNA.</text>
</comment>
<comment type="subunit">
    <text evidence="1">Part of the 30S ribosomal subunit.</text>
</comment>
<comment type="similarity">
    <text evidence="1">Belongs to the universal ribosomal protein uS17 family.</text>
</comment>
<protein>
    <recommendedName>
        <fullName evidence="1">Small ribosomal subunit protein uS17</fullName>
    </recommendedName>
    <alternativeName>
        <fullName evidence="2">30S ribosomal protein S17</fullName>
    </alternativeName>
</protein>
<organism>
    <name type="scientific">Chlorobaculum tepidum (strain ATCC 49652 / DSM 12025 / NBRC 103806 / TLS)</name>
    <name type="common">Chlorobium tepidum</name>
    <dbReference type="NCBI Taxonomy" id="194439"/>
    <lineage>
        <taxon>Bacteria</taxon>
        <taxon>Pseudomonadati</taxon>
        <taxon>Chlorobiota</taxon>
        <taxon>Chlorobiia</taxon>
        <taxon>Chlorobiales</taxon>
        <taxon>Chlorobiaceae</taxon>
        <taxon>Chlorobaculum</taxon>
    </lineage>
</organism>
<gene>
    <name evidence="1" type="primary">rpsQ</name>
    <name type="ordered locus">CT2180</name>
</gene>
<proteinExistence type="inferred from homology"/>